<evidence type="ECO:0000305" key="1"/>
<evidence type="ECO:0000312" key="2">
    <source>
        <dbReference type="HGNC" id="HGNC:44268"/>
    </source>
</evidence>
<organism>
    <name type="scientific">Homo sapiens</name>
    <name type="common">Human</name>
    <dbReference type="NCBI Taxonomy" id="9606"/>
    <lineage>
        <taxon>Eukaryota</taxon>
        <taxon>Metazoa</taxon>
        <taxon>Chordata</taxon>
        <taxon>Craniata</taxon>
        <taxon>Vertebrata</taxon>
        <taxon>Euteleostomi</taxon>
        <taxon>Mammalia</taxon>
        <taxon>Eutheria</taxon>
        <taxon>Euarchontoglires</taxon>
        <taxon>Primates</taxon>
        <taxon>Haplorrhini</taxon>
        <taxon>Catarrhini</taxon>
        <taxon>Hominidae</taxon>
        <taxon>Homo</taxon>
    </lineage>
</organism>
<comment type="similarity">
    <text evidence="1">Belongs to the FAM236 family.</text>
</comment>
<gene>
    <name evidence="2" type="primary">FAM236A</name>
</gene>
<reference key="1">
    <citation type="journal article" date="2005" name="Nature">
        <title>The DNA sequence of the human X chromosome.</title>
        <authorList>
            <person name="Ross M.T."/>
            <person name="Grafham D.V."/>
            <person name="Coffey A.J."/>
            <person name="Scherer S."/>
            <person name="McLay K."/>
            <person name="Muzny D."/>
            <person name="Platzer M."/>
            <person name="Howell G.R."/>
            <person name="Burrows C."/>
            <person name="Bird C.P."/>
            <person name="Frankish A."/>
            <person name="Lovell F.L."/>
            <person name="Howe K.L."/>
            <person name="Ashurst J.L."/>
            <person name="Fulton R.S."/>
            <person name="Sudbrak R."/>
            <person name="Wen G."/>
            <person name="Jones M.C."/>
            <person name="Hurles M.E."/>
            <person name="Andrews T.D."/>
            <person name="Scott C.E."/>
            <person name="Searle S."/>
            <person name="Ramser J."/>
            <person name="Whittaker A."/>
            <person name="Deadman R."/>
            <person name="Carter N.P."/>
            <person name="Hunt S.E."/>
            <person name="Chen R."/>
            <person name="Cree A."/>
            <person name="Gunaratne P."/>
            <person name="Havlak P."/>
            <person name="Hodgson A."/>
            <person name="Metzker M.L."/>
            <person name="Richards S."/>
            <person name="Scott G."/>
            <person name="Steffen D."/>
            <person name="Sodergren E."/>
            <person name="Wheeler D.A."/>
            <person name="Worley K.C."/>
            <person name="Ainscough R."/>
            <person name="Ambrose K.D."/>
            <person name="Ansari-Lari M.A."/>
            <person name="Aradhya S."/>
            <person name="Ashwell R.I."/>
            <person name="Babbage A.K."/>
            <person name="Bagguley C.L."/>
            <person name="Ballabio A."/>
            <person name="Banerjee R."/>
            <person name="Barker G.E."/>
            <person name="Barlow K.F."/>
            <person name="Barrett I.P."/>
            <person name="Bates K.N."/>
            <person name="Beare D.M."/>
            <person name="Beasley H."/>
            <person name="Beasley O."/>
            <person name="Beck A."/>
            <person name="Bethel G."/>
            <person name="Blechschmidt K."/>
            <person name="Brady N."/>
            <person name="Bray-Allen S."/>
            <person name="Bridgeman A.M."/>
            <person name="Brown A.J."/>
            <person name="Brown M.J."/>
            <person name="Bonnin D."/>
            <person name="Bruford E.A."/>
            <person name="Buhay C."/>
            <person name="Burch P."/>
            <person name="Burford D."/>
            <person name="Burgess J."/>
            <person name="Burrill W."/>
            <person name="Burton J."/>
            <person name="Bye J.M."/>
            <person name="Carder C."/>
            <person name="Carrel L."/>
            <person name="Chako J."/>
            <person name="Chapman J.C."/>
            <person name="Chavez D."/>
            <person name="Chen E."/>
            <person name="Chen G."/>
            <person name="Chen Y."/>
            <person name="Chen Z."/>
            <person name="Chinault C."/>
            <person name="Ciccodicola A."/>
            <person name="Clark S.Y."/>
            <person name="Clarke G."/>
            <person name="Clee C.M."/>
            <person name="Clegg S."/>
            <person name="Clerc-Blankenburg K."/>
            <person name="Clifford K."/>
            <person name="Cobley V."/>
            <person name="Cole C.G."/>
            <person name="Conquer J.S."/>
            <person name="Corby N."/>
            <person name="Connor R.E."/>
            <person name="David R."/>
            <person name="Davies J."/>
            <person name="Davis C."/>
            <person name="Davis J."/>
            <person name="Delgado O."/>
            <person name="Deshazo D."/>
            <person name="Dhami P."/>
            <person name="Ding Y."/>
            <person name="Dinh H."/>
            <person name="Dodsworth S."/>
            <person name="Draper H."/>
            <person name="Dugan-Rocha S."/>
            <person name="Dunham A."/>
            <person name="Dunn M."/>
            <person name="Durbin K.J."/>
            <person name="Dutta I."/>
            <person name="Eades T."/>
            <person name="Ellwood M."/>
            <person name="Emery-Cohen A."/>
            <person name="Errington H."/>
            <person name="Evans K.L."/>
            <person name="Faulkner L."/>
            <person name="Francis F."/>
            <person name="Frankland J."/>
            <person name="Fraser A.E."/>
            <person name="Galgoczy P."/>
            <person name="Gilbert J."/>
            <person name="Gill R."/>
            <person name="Gloeckner G."/>
            <person name="Gregory S.G."/>
            <person name="Gribble S."/>
            <person name="Griffiths C."/>
            <person name="Grocock R."/>
            <person name="Gu Y."/>
            <person name="Gwilliam R."/>
            <person name="Hamilton C."/>
            <person name="Hart E.A."/>
            <person name="Hawes A."/>
            <person name="Heath P.D."/>
            <person name="Heitmann K."/>
            <person name="Hennig S."/>
            <person name="Hernandez J."/>
            <person name="Hinzmann B."/>
            <person name="Ho S."/>
            <person name="Hoffs M."/>
            <person name="Howden P.J."/>
            <person name="Huckle E.J."/>
            <person name="Hume J."/>
            <person name="Hunt P.J."/>
            <person name="Hunt A.R."/>
            <person name="Isherwood J."/>
            <person name="Jacob L."/>
            <person name="Johnson D."/>
            <person name="Jones S."/>
            <person name="de Jong P.J."/>
            <person name="Joseph S.S."/>
            <person name="Keenan S."/>
            <person name="Kelly S."/>
            <person name="Kershaw J.K."/>
            <person name="Khan Z."/>
            <person name="Kioschis P."/>
            <person name="Klages S."/>
            <person name="Knights A.J."/>
            <person name="Kosiura A."/>
            <person name="Kovar-Smith C."/>
            <person name="Laird G.K."/>
            <person name="Langford C."/>
            <person name="Lawlor S."/>
            <person name="Leversha M."/>
            <person name="Lewis L."/>
            <person name="Liu W."/>
            <person name="Lloyd C."/>
            <person name="Lloyd D.M."/>
            <person name="Loulseged H."/>
            <person name="Loveland J.E."/>
            <person name="Lovell J.D."/>
            <person name="Lozado R."/>
            <person name="Lu J."/>
            <person name="Lyne R."/>
            <person name="Ma J."/>
            <person name="Maheshwari M."/>
            <person name="Matthews L.H."/>
            <person name="McDowall J."/>
            <person name="McLaren S."/>
            <person name="McMurray A."/>
            <person name="Meidl P."/>
            <person name="Meitinger T."/>
            <person name="Milne S."/>
            <person name="Miner G."/>
            <person name="Mistry S.L."/>
            <person name="Morgan M."/>
            <person name="Morris S."/>
            <person name="Mueller I."/>
            <person name="Mullikin J.C."/>
            <person name="Nguyen N."/>
            <person name="Nordsiek G."/>
            <person name="Nyakatura G."/>
            <person name="O'dell C.N."/>
            <person name="Okwuonu G."/>
            <person name="Palmer S."/>
            <person name="Pandian R."/>
            <person name="Parker D."/>
            <person name="Parrish J."/>
            <person name="Pasternak S."/>
            <person name="Patel D."/>
            <person name="Pearce A.V."/>
            <person name="Pearson D.M."/>
            <person name="Pelan S.E."/>
            <person name="Perez L."/>
            <person name="Porter K.M."/>
            <person name="Ramsey Y."/>
            <person name="Reichwald K."/>
            <person name="Rhodes S."/>
            <person name="Ridler K.A."/>
            <person name="Schlessinger D."/>
            <person name="Schueler M.G."/>
            <person name="Sehra H.K."/>
            <person name="Shaw-Smith C."/>
            <person name="Shen H."/>
            <person name="Sheridan E.M."/>
            <person name="Shownkeen R."/>
            <person name="Skuce C.D."/>
            <person name="Smith M.L."/>
            <person name="Sotheran E.C."/>
            <person name="Steingruber H.E."/>
            <person name="Steward C.A."/>
            <person name="Storey R."/>
            <person name="Swann R.M."/>
            <person name="Swarbreck D."/>
            <person name="Tabor P.E."/>
            <person name="Taudien S."/>
            <person name="Taylor T."/>
            <person name="Teague B."/>
            <person name="Thomas K."/>
            <person name="Thorpe A."/>
            <person name="Timms K."/>
            <person name="Tracey A."/>
            <person name="Trevanion S."/>
            <person name="Tromans A.C."/>
            <person name="d'Urso M."/>
            <person name="Verduzco D."/>
            <person name="Villasana D."/>
            <person name="Waldron L."/>
            <person name="Wall M."/>
            <person name="Wang Q."/>
            <person name="Warren J."/>
            <person name="Warry G.L."/>
            <person name="Wei X."/>
            <person name="West A."/>
            <person name="Whitehead S.L."/>
            <person name="Whiteley M.N."/>
            <person name="Wilkinson J.E."/>
            <person name="Willey D.L."/>
            <person name="Williams G."/>
            <person name="Williams L."/>
            <person name="Williamson A."/>
            <person name="Williamson H."/>
            <person name="Wilming L."/>
            <person name="Woodmansey R.L."/>
            <person name="Wray P.W."/>
            <person name="Yen J."/>
            <person name="Zhang J."/>
            <person name="Zhou J."/>
            <person name="Zoghbi H."/>
            <person name="Zorilla S."/>
            <person name="Buck D."/>
            <person name="Reinhardt R."/>
            <person name="Poustka A."/>
            <person name="Rosenthal A."/>
            <person name="Lehrach H."/>
            <person name="Meindl A."/>
            <person name="Minx P.J."/>
            <person name="Hillier L.W."/>
            <person name="Willard H.F."/>
            <person name="Wilson R.K."/>
            <person name="Waterston R.H."/>
            <person name="Rice C.M."/>
            <person name="Vaudin M."/>
            <person name="Coulson A."/>
            <person name="Nelson D.L."/>
            <person name="Weinstock G."/>
            <person name="Sulston J.E."/>
            <person name="Durbin R.M."/>
            <person name="Hubbard T."/>
            <person name="Gibbs R.A."/>
            <person name="Beck S."/>
            <person name="Rogers J."/>
            <person name="Bentley D.R."/>
        </authorList>
    </citation>
    <scope>NUCLEOTIDE SEQUENCE [LARGE SCALE GENOMIC DNA]</scope>
</reference>
<protein>
    <recommendedName>
        <fullName evidence="1">Protein FAM236A</fullName>
    </recommendedName>
</protein>
<feature type="chain" id="PRO_0000440023" description="Protein FAM236A">
    <location>
        <begin position="1"/>
        <end position="79"/>
    </location>
</feature>
<accession>A0A1B0GUQ0</accession>
<sequence>MIFTPFLPPADLSVFQNVKGLQNDPEEWVAVSDATEDPSGGTGLPREPALLRGSWRSRFQRALACFTKCFRGGYRALGI</sequence>
<keyword id="KW-1185">Reference proteome</keyword>
<name>F236A_HUMAN</name>
<proteinExistence type="inferred from homology"/>
<dbReference type="EMBL" id="AC234776">
    <property type="status" value="NOT_ANNOTATED_CDS"/>
    <property type="molecule type" value="Genomic_DNA"/>
</dbReference>
<dbReference type="CCDS" id="CCDS87765.1"/>
<dbReference type="RefSeq" id="NP_001334999.1">
    <property type="nucleotide sequence ID" value="NM_001348070.2"/>
</dbReference>
<dbReference type="BioMuta" id="FAM236A"/>
<dbReference type="MassIVE" id="A0A1B0GUQ0"/>
<dbReference type="PeptideAtlas" id="A0A1B0GUQ0"/>
<dbReference type="DNASU" id="100129407"/>
<dbReference type="Ensembl" id="ENST00000611003.2">
    <property type="protein sequence ID" value="ENSP00000490343.2"/>
    <property type="gene ID" value="ENSG00000275520.2"/>
</dbReference>
<dbReference type="GeneID" id="100129407"/>
<dbReference type="KEGG" id="hsa:100129407"/>
<dbReference type="KEGG" id="hsa:100132304"/>
<dbReference type="MANE-Select" id="ENST00000611003.2">
    <property type="protein sequence ID" value="ENSP00000490343.2"/>
    <property type="RefSeq nucleotide sequence ID" value="NM_001348070.2"/>
    <property type="RefSeq protein sequence ID" value="NP_001334999.1"/>
</dbReference>
<dbReference type="AGR" id="HGNC:44268"/>
<dbReference type="AGR" id="HGNC:52640"/>
<dbReference type="CTD" id="100129407"/>
<dbReference type="CTD" id="100132304"/>
<dbReference type="GeneCards" id="FAM236A"/>
<dbReference type="HGNC" id="HGNC:44268">
    <property type="gene designation" value="FAM236A"/>
</dbReference>
<dbReference type="HPA" id="ENSG00000275520">
    <property type="expression patterns" value="Tissue enriched (testis)"/>
</dbReference>
<dbReference type="neXtProt" id="NX_A0A1B0GUQ0"/>
<dbReference type="VEuPathDB" id="HostDB:ENSG00000275520"/>
<dbReference type="InParanoid" id="A0A1B0GUQ0"/>
<dbReference type="OMA" id="PGSWRIR"/>
<dbReference type="OrthoDB" id="9538021at2759"/>
<dbReference type="PAN-GO" id="A0A1B0GUQ0">
    <property type="GO annotations" value="0 GO annotations based on evolutionary models"/>
</dbReference>
<dbReference type="PathwayCommons" id="A0A1B0GUQ0"/>
<dbReference type="BioGRID-ORCS" id="100129407">
    <property type="hits" value="0 hits in 2 CRISPR screens"/>
</dbReference>
<dbReference type="BioGRID-ORCS" id="100132304">
    <property type="hits" value="0 hits in 1 CRISPR screen"/>
</dbReference>
<dbReference type="Pharos" id="A0A1B0GUQ0">
    <property type="development level" value="Tdark"/>
</dbReference>
<dbReference type="PRO" id="PR:A0A1B0GUQ0"/>
<dbReference type="Proteomes" id="UP000005640">
    <property type="component" value="Chromosome X"/>
</dbReference>
<dbReference type="RNAct" id="A0A1B0GUQ0">
    <property type="molecule type" value="protein"/>
</dbReference>
<dbReference type="Bgee" id="ENSG00000275520">
    <property type="expression patterns" value="Expressed in right testis and 84 other cell types or tissues"/>
</dbReference>
<dbReference type="ExpressionAtlas" id="A0A1B0GUQ0">
    <property type="expression patterns" value="baseline"/>
</dbReference>